<sequence>MANLTYSERAQKTKSPLVKKLFTIIEEKKTNLCASVDVRSTSQFLDLIEKLGPYICVVKTHIDILDDFSYEKTIVPLLELKKKFNFLIFEDRKFADIGNTVKLQYSAGIYKISSWADISNAHGVPGQGIVAGLKQAAQETTQEPRGLLMLAELSSKGSIATGEYTEKTIDIARSDKEFVVGFIAQRKIEAKDDDEDWVVMTPGVGLDDKGDALGQQYRTVSEVVTGAGSDIIIVGRGLIGAGRDPVAEGLRYRKAGWDAYLARLS</sequence>
<evidence type="ECO:0000250" key="1"/>
<evidence type="ECO:0000255" key="2">
    <source>
        <dbReference type="PROSITE-ProRule" id="PRU10110"/>
    </source>
</evidence>
<evidence type="ECO:0000305" key="3"/>
<protein>
    <recommendedName>
        <fullName>Orotidine 5'-phosphate decarboxylase</fullName>
        <ecNumber>4.1.1.23</ecNumber>
    </recommendedName>
    <alternativeName>
        <fullName>OMP decarboxylase</fullName>
        <shortName>OMPDCase</shortName>
        <shortName>OMPdecase</shortName>
    </alternativeName>
    <alternativeName>
        <fullName>Uridine 5'-monophosphate synthase</fullName>
        <shortName>UMP synthase</shortName>
    </alternativeName>
</protein>
<name>PYRF_SACFI</name>
<dbReference type="EC" id="4.1.1.23"/>
<dbReference type="EMBL" id="AJ245745">
    <property type="protein sequence ID" value="CAB53393.1"/>
    <property type="molecule type" value="Genomic_DNA"/>
</dbReference>
<dbReference type="SMR" id="Q9UVZ5"/>
<dbReference type="UniPathway" id="UPA00070">
    <property type="reaction ID" value="UER00120"/>
</dbReference>
<dbReference type="GO" id="GO:0004588">
    <property type="term" value="F:orotate phosphoribosyltransferase activity"/>
    <property type="evidence" value="ECO:0007669"/>
    <property type="project" value="TreeGrafter"/>
</dbReference>
<dbReference type="GO" id="GO:0004590">
    <property type="term" value="F:orotidine-5'-phosphate decarboxylase activity"/>
    <property type="evidence" value="ECO:0007669"/>
    <property type="project" value="UniProtKB-EC"/>
</dbReference>
<dbReference type="GO" id="GO:0006207">
    <property type="term" value="P:'de novo' pyrimidine nucleobase biosynthetic process"/>
    <property type="evidence" value="ECO:0007669"/>
    <property type="project" value="InterPro"/>
</dbReference>
<dbReference type="GO" id="GO:0044205">
    <property type="term" value="P:'de novo' UMP biosynthetic process"/>
    <property type="evidence" value="ECO:0007669"/>
    <property type="project" value="UniProtKB-UniPathway"/>
</dbReference>
<dbReference type="CDD" id="cd04725">
    <property type="entry name" value="OMP_decarboxylase_like"/>
    <property type="match status" value="1"/>
</dbReference>
<dbReference type="FunFam" id="3.20.20.70:FF:000114">
    <property type="entry name" value="Decarboxylase,orotidine phosphate"/>
    <property type="match status" value="1"/>
</dbReference>
<dbReference type="Gene3D" id="3.20.20.70">
    <property type="entry name" value="Aldolase class I"/>
    <property type="match status" value="1"/>
</dbReference>
<dbReference type="InterPro" id="IPR013785">
    <property type="entry name" value="Aldolase_TIM"/>
</dbReference>
<dbReference type="InterPro" id="IPR014732">
    <property type="entry name" value="OMPdecase"/>
</dbReference>
<dbReference type="InterPro" id="IPR018089">
    <property type="entry name" value="OMPdecase_AS"/>
</dbReference>
<dbReference type="InterPro" id="IPR001754">
    <property type="entry name" value="OMPdeCOase_dom"/>
</dbReference>
<dbReference type="InterPro" id="IPR011060">
    <property type="entry name" value="RibuloseP-bd_barrel"/>
</dbReference>
<dbReference type="NCBIfam" id="TIGR01740">
    <property type="entry name" value="pyrF"/>
    <property type="match status" value="1"/>
</dbReference>
<dbReference type="PANTHER" id="PTHR19278">
    <property type="entry name" value="OROTATE PHOSPHORIBOSYLTRANSFERASE"/>
    <property type="match status" value="1"/>
</dbReference>
<dbReference type="PANTHER" id="PTHR19278:SF9">
    <property type="entry name" value="URIDINE 5'-MONOPHOSPHATE SYNTHASE"/>
    <property type="match status" value="1"/>
</dbReference>
<dbReference type="Pfam" id="PF00215">
    <property type="entry name" value="OMPdecase"/>
    <property type="match status" value="1"/>
</dbReference>
<dbReference type="SMART" id="SM00934">
    <property type="entry name" value="OMPdecase"/>
    <property type="match status" value="1"/>
</dbReference>
<dbReference type="SUPFAM" id="SSF51366">
    <property type="entry name" value="Ribulose-phoshate binding barrel"/>
    <property type="match status" value="1"/>
</dbReference>
<dbReference type="PROSITE" id="PS00156">
    <property type="entry name" value="OMPDECASE"/>
    <property type="match status" value="1"/>
</dbReference>
<keyword id="KW-0210">Decarboxylase</keyword>
<keyword id="KW-0456">Lyase</keyword>
<keyword id="KW-0665">Pyrimidine biosynthesis</keyword>
<feature type="chain" id="PRO_0000134681" description="Orotidine 5'-phosphate decarboxylase">
    <location>
        <begin position="1"/>
        <end position="265"/>
    </location>
</feature>
<feature type="active site" description="Proton donor" evidence="2">
    <location>
        <position position="93"/>
    </location>
</feature>
<feature type="binding site" evidence="1">
    <location>
        <position position="37"/>
    </location>
    <ligand>
        <name>substrate</name>
    </ligand>
</feature>
<feature type="binding site" evidence="1">
    <location>
        <begin position="59"/>
        <end position="61"/>
    </location>
    <ligand>
        <name>substrate</name>
    </ligand>
</feature>
<feature type="binding site" evidence="1">
    <location>
        <begin position="91"/>
        <end position="100"/>
    </location>
    <ligand>
        <name>substrate</name>
    </ligand>
</feature>
<feature type="binding site" evidence="1">
    <location>
        <position position="217"/>
    </location>
    <ligand>
        <name>substrate</name>
    </ligand>
</feature>
<feature type="binding site" evidence="1">
    <location>
        <position position="236"/>
    </location>
    <ligand>
        <name>substrate</name>
    </ligand>
</feature>
<gene>
    <name type="primary">URA3</name>
</gene>
<proteinExistence type="inferred from homology"/>
<accession>Q9UVZ5</accession>
<reference key="1">
    <citation type="journal article" date="2000" name="Gene">
        <title>Transformation of Endomyces fibuliger based on its gene for orotidine-5'-phosphate decarboxylase.</title>
        <authorList>
            <person name="Ngan W.Y."/>
            <person name="Nga B.H."/>
            <person name="Pridmore R.D."/>
            <person name="Mollet B."/>
            <person name="Tan H.M."/>
        </authorList>
    </citation>
    <scope>NUCLEOTIDE SEQUENCE [GENOMIC DNA]</scope>
    <source>
        <strain>8014 met</strain>
    </source>
</reference>
<comment type="catalytic activity">
    <reaction evidence="2">
        <text>orotidine 5'-phosphate + H(+) = UMP + CO2</text>
        <dbReference type="Rhea" id="RHEA:11596"/>
        <dbReference type="ChEBI" id="CHEBI:15378"/>
        <dbReference type="ChEBI" id="CHEBI:16526"/>
        <dbReference type="ChEBI" id="CHEBI:57538"/>
        <dbReference type="ChEBI" id="CHEBI:57865"/>
        <dbReference type="EC" id="4.1.1.23"/>
    </reaction>
</comment>
<comment type="pathway">
    <text>Pyrimidine metabolism; UMP biosynthesis via de novo pathway; UMP from orotate: step 2/2.</text>
</comment>
<comment type="similarity">
    <text evidence="3">Belongs to the OMP decarboxylase family.</text>
</comment>
<organism>
    <name type="scientific">Saccharomycopsis fibuligera</name>
    <name type="common">Yeast</name>
    <dbReference type="NCBI Taxonomy" id="4944"/>
    <lineage>
        <taxon>Eukaryota</taxon>
        <taxon>Fungi</taxon>
        <taxon>Dikarya</taxon>
        <taxon>Ascomycota</taxon>
        <taxon>Saccharomycotina</taxon>
        <taxon>Saccharomycetes</taxon>
        <taxon>Saccharomycopsidaceae</taxon>
        <taxon>Saccharomycopsis</taxon>
    </lineage>
</organism>